<organism>
    <name type="scientific">Schizosaccharomyces pombe (strain 972 / ATCC 24843)</name>
    <name type="common">Fission yeast</name>
    <dbReference type="NCBI Taxonomy" id="284812"/>
    <lineage>
        <taxon>Eukaryota</taxon>
        <taxon>Fungi</taxon>
        <taxon>Dikarya</taxon>
        <taxon>Ascomycota</taxon>
        <taxon>Taphrinomycotina</taxon>
        <taxon>Schizosaccharomycetes</taxon>
        <taxon>Schizosaccharomycetales</taxon>
        <taxon>Schizosaccharomycetaceae</taxon>
        <taxon>Schizosaccharomyces</taxon>
    </lineage>
</organism>
<gene>
    <name type="primary">mat3-Mc</name>
    <name type="synonym">matMc</name>
    <name type="ORF">SPBC1711.02</name>
</gene>
<feature type="chain" id="PRO_0000048585" description="Silenced mating-type M-specific polypeptide Mc">
    <location>
        <begin position="1"/>
        <end position="181"/>
    </location>
</feature>
<feature type="DNA-binding region" description="HMG box" evidence="1">
    <location>
        <begin position="103"/>
        <end position="171"/>
    </location>
</feature>
<keyword id="KW-0238">DNA-binding</keyword>
<keyword id="KW-1185">Reference proteome</keyword>
<keyword id="KW-0804">Transcription</keyword>
<keyword id="KW-0805">Transcription regulation</keyword>
<proteinExistence type="predicted"/>
<name>MTMC3_SCHPO</name>
<sequence>MDSHQELSAGSPISYDFLDPDWCFKRYLTKDALHSIETGKGAAYFVPDGFTPILIPNSQSYLLDGNSAQLPRPQPISFTLDQCKVPGYILKSLRKDTTSTERTPRPPNAFILYRKEKHATLLKSNPSINNSQVSKLVGEMWRNESKEVRMRYFKMSEFYKAQHQKMYPGYKYQPRKNKVKR</sequence>
<dbReference type="EMBL" id="CU329671">
    <property type="protein sequence ID" value="CAB88232.1"/>
    <property type="molecule type" value="Genomic_DNA"/>
</dbReference>
<dbReference type="PIR" id="S00555">
    <property type="entry name" value="S00555"/>
</dbReference>
<dbReference type="RefSeq" id="NP_595867.1">
    <property type="nucleotide sequence ID" value="NM_001021773.2"/>
</dbReference>
<dbReference type="RefSeq" id="NP_595875.1">
    <property type="nucleotide sequence ID" value="NM_001021781.1"/>
</dbReference>
<dbReference type="SMR" id="P0CY16"/>
<dbReference type="BioGRID" id="276177">
    <property type="interactions" value="1"/>
</dbReference>
<dbReference type="BioGRID" id="276586">
    <property type="interactions" value="1"/>
</dbReference>
<dbReference type="STRING" id="284812.P0CY16"/>
<dbReference type="EnsemblFungi" id="SPBC1711.02.1">
    <property type="protein sequence ID" value="SPBC1711.02.1:pep"/>
    <property type="gene ID" value="SPBC1711.02"/>
</dbReference>
<dbReference type="EnsemblFungi" id="SPBC23G7.09.1">
    <property type="protein sequence ID" value="SPBC23G7.09.1:pep"/>
    <property type="gene ID" value="SPBC23G7.09"/>
</dbReference>
<dbReference type="EnsemblFungi" id="SPMTR.04.1">
    <property type="protein sequence ID" value="SPMTR.04.1:pep"/>
    <property type="gene ID" value="SPMTR.04"/>
</dbReference>
<dbReference type="GeneID" id="2539619"/>
<dbReference type="GeneID" id="2540048"/>
<dbReference type="KEGG" id="spo:2539619"/>
<dbReference type="KEGG" id="spo:2540048"/>
<dbReference type="PomBase" id="SPBC1711.02">
    <property type="gene designation" value="mat3-Mc"/>
</dbReference>
<dbReference type="VEuPathDB" id="FungiDB:SPBC1711.02"/>
<dbReference type="VEuPathDB" id="FungiDB:SPBC23G7.09"/>
<dbReference type="VEuPathDB" id="FungiDB:SPMTR.04"/>
<dbReference type="HOGENOM" id="CLU_128900_0_0_1"/>
<dbReference type="InParanoid" id="P0CY16"/>
<dbReference type="OMA" id="SETNPGM"/>
<dbReference type="PhylomeDB" id="P0CY16"/>
<dbReference type="PRO" id="PR:P0CY16"/>
<dbReference type="Proteomes" id="UP000002485">
    <property type="component" value="Chromosome II"/>
</dbReference>
<dbReference type="GO" id="GO:0005634">
    <property type="term" value="C:nucleus"/>
    <property type="evidence" value="ECO:0000318"/>
    <property type="project" value="GO_Central"/>
</dbReference>
<dbReference type="GO" id="GO:0001228">
    <property type="term" value="F:DNA-binding transcription activator activity, RNA polymerase II-specific"/>
    <property type="evidence" value="ECO:0000318"/>
    <property type="project" value="GO_Central"/>
</dbReference>
<dbReference type="GO" id="GO:0000978">
    <property type="term" value="F:RNA polymerase II cis-regulatory region sequence-specific DNA binding"/>
    <property type="evidence" value="ECO:0000318"/>
    <property type="project" value="GO_Central"/>
</dbReference>
<dbReference type="GO" id="GO:0030154">
    <property type="term" value="P:cell differentiation"/>
    <property type="evidence" value="ECO:0000318"/>
    <property type="project" value="GO_Central"/>
</dbReference>
<dbReference type="GO" id="GO:0045944">
    <property type="term" value="P:positive regulation of transcription by RNA polymerase II"/>
    <property type="evidence" value="ECO:0000318"/>
    <property type="project" value="GO_Central"/>
</dbReference>
<dbReference type="CDD" id="cd01389">
    <property type="entry name" value="HMG-box_ROX1-like"/>
    <property type="match status" value="1"/>
</dbReference>
<dbReference type="FunFam" id="1.10.30.10:FF:000041">
    <property type="entry name" value="HMG box family protein"/>
    <property type="match status" value="1"/>
</dbReference>
<dbReference type="Gene3D" id="1.10.30.10">
    <property type="entry name" value="High mobility group box domain"/>
    <property type="match status" value="1"/>
</dbReference>
<dbReference type="InterPro" id="IPR009071">
    <property type="entry name" value="HMG_box_dom"/>
</dbReference>
<dbReference type="InterPro" id="IPR036910">
    <property type="entry name" value="HMG_box_dom_sf"/>
</dbReference>
<dbReference type="InterPro" id="IPR050140">
    <property type="entry name" value="SRY-related_HMG-box_TF-like"/>
</dbReference>
<dbReference type="PANTHER" id="PTHR10270:SF161">
    <property type="entry name" value="SEX-DETERMINING REGION Y PROTEIN"/>
    <property type="match status" value="1"/>
</dbReference>
<dbReference type="PANTHER" id="PTHR10270">
    <property type="entry name" value="SOX TRANSCRIPTION FACTOR"/>
    <property type="match status" value="1"/>
</dbReference>
<dbReference type="Pfam" id="PF00505">
    <property type="entry name" value="HMG_box"/>
    <property type="match status" value="1"/>
</dbReference>
<dbReference type="SMART" id="SM00398">
    <property type="entry name" value="HMG"/>
    <property type="match status" value="1"/>
</dbReference>
<dbReference type="SUPFAM" id="SSF47095">
    <property type="entry name" value="HMG-box"/>
    <property type="match status" value="1"/>
</dbReference>
<dbReference type="PROSITE" id="PS50118">
    <property type="entry name" value="HMG_BOX_2"/>
    <property type="match status" value="1"/>
</dbReference>
<protein>
    <recommendedName>
        <fullName>Silenced mating-type M-specific polypeptide Mc</fullName>
        <shortName>mat-Mc</shortName>
    </recommendedName>
</protein>
<comment type="function">
    <text>Mating type proteins are sequence specific DNA-binding proteins that act as master switches in yeast differentiation by controlling gene expression in a cell type-specific fashion. Silenced copy of mat-Mc at mat3-M.</text>
</comment>
<comment type="miscellaneous">
    <text>There are three genetic loci for mating type genes in S.pombe, mat1, mat2-P and mat3-M. Cell type is determined by the alternate allele present in mat1, either P (plus) in a h+ or M (minus) in a h- cell. Mat2-P and mat3-M serve as donor of information that is transposed to mat1 during a switch of mating type.</text>
</comment>
<evidence type="ECO:0000255" key="1">
    <source>
        <dbReference type="PROSITE-ProRule" id="PRU00267"/>
    </source>
</evidence>
<accession>P0CY16</accession>
<accession>P10840</accession>
<accession>Q9URE7</accession>
<reference key="1">
    <citation type="journal article" date="2002" name="Nature">
        <title>The genome sequence of Schizosaccharomyces pombe.</title>
        <authorList>
            <person name="Wood V."/>
            <person name="Gwilliam R."/>
            <person name="Rajandream M.A."/>
            <person name="Lyne M.H."/>
            <person name="Lyne R."/>
            <person name="Stewart A."/>
            <person name="Sgouros J.G."/>
            <person name="Peat N."/>
            <person name="Hayles J."/>
            <person name="Baker S.G."/>
            <person name="Basham D."/>
            <person name="Bowman S."/>
            <person name="Brooks K."/>
            <person name="Brown D."/>
            <person name="Brown S."/>
            <person name="Chillingworth T."/>
            <person name="Churcher C.M."/>
            <person name="Collins M."/>
            <person name="Connor R."/>
            <person name="Cronin A."/>
            <person name="Davis P."/>
            <person name="Feltwell T."/>
            <person name="Fraser A."/>
            <person name="Gentles S."/>
            <person name="Goble A."/>
            <person name="Hamlin N."/>
            <person name="Harris D.E."/>
            <person name="Hidalgo J."/>
            <person name="Hodgson G."/>
            <person name="Holroyd S."/>
            <person name="Hornsby T."/>
            <person name="Howarth S."/>
            <person name="Huckle E.J."/>
            <person name="Hunt S."/>
            <person name="Jagels K."/>
            <person name="James K.D."/>
            <person name="Jones L."/>
            <person name="Jones M."/>
            <person name="Leather S."/>
            <person name="McDonald S."/>
            <person name="McLean J."/>
            <person name="Mooney P."/>
            <person name="Moule S."/>
            <person name="Mungall K.L."/>
            <person name="Murphy L.D."/>
            <person name="Niblett D."/>
            <person name="Odell C."/>
            <person name="Oliver K."/>
            <person name="O'Neil S."/>
            <person name="Pearson D."/>
            <person name="Quail M.A."/>
            <person name="Rabbinowitsch E."/>
            <person name="Rutherford K.M."/>
            <person name="Rutter S."/>
            <person name="Saunders D."/>
            <person name="Seeger K."/>
            <person name="Sharp S."/>
            <person name="Skelton J."/>
            <person name="Simmonds M.N."/>
            <person name="Squares R."/>
            <person name="Squares S."/>
            <person name="Stevens K."/>
            <person name="Taylor K."/>
            <person name="Taylor R.G."/>
            <person name="Tivey A."/>
            <person name="Walsh S.V."/>
            <person name="Warren T."/>
            <person name="Whitehead S."/>
            <person name="Woodward J.R."/>
            <person name="Volckaert G."/>
            <person name="Aert R."/>
            <person name="Robben J."/>
            <person name="Grymonprez B."/>
            <person name="Weltjens I."/>
            <person name="Vanstreels E."/>
            <person name="Rieger M."/>
            <person name="Schaefer M."/>
            <person name="Mueller-Auer S."/>
            <person name="Gabel C."/>
            <person name="Fuchs M."/>
            <person name="Duesterhoeft A."/>
            <person name="Fritzc C."/>
            <person name="Holzer E."/>
            <person name="Moestl D."/>
            <person name="Hilbert H."/>
            <person name="Borzym K."/>
            <person name="Langer I."/>
            <person name="Beck A."/>
            <person name="Lehrach H."/>
            <person name="Reinhardt R."/>
            <person name="Pohl T.M."/>
            <person name="Eger P."/>
            <person name="Zimmermann W."/>
            <person name="Wedler H."/>
            <person name="Wambutt R."/>
            <person name="Purnelle B."/>
            <person name="Goffeau A."/>
            <person name="Cadieu E."/>
            <person name="Dreano S."/>
            <person name="Gloux S."/>
            <person name="Lelaure V."/>
            <person name="Mottier S."/>
            <person name="Galibert F."/>
            <person name="Aves S.J."/>
            <person name="Xiang Z."/>
            <person name="Hunt C."/>
            <person name="Moore K."/>
            <person name="Hurst S.M."/>
            <person name="Lucas M."/>
            <person name="Rochet M."/>
            <person name="Gaillardin C."/>
            <person name="Tallada V.A."/>
            <person name="Garzon A."/>
            <person name="Thode G."/>
            <person name="Daga R.R."/>
            <person name="Cruzado L."/>
            <person name="Jimenez J."/>
            <person name="Sanchez M."/>
            <person name="del Rey F."/>
            <person name="Benito J."/>
            <person name="Dominguez A."/>
            <person name="Revuelta J.L."/>
            <person name="Moreno S."/>
            <person name="Armstrong J."/>
            <person name="Forsburg S.L."/>
            <person name="Cerutti L."/>
            <person name="Lowe T."/>
            <person name="McCombie W.R."/>
            <person name="Paulsen I."/>
            <person name="Potashkin J."/>
            <person name="Shpakovski G.V."/>
            <person name="Ussery D."/>
            <person name="Barrell B.G."/>
            <person name="Nurse P."/>
        </authorList>
    </citation>
    <scope>NUCLEOTIDE SEQUENCE [LARGE SCALE GENOMIC DNA] (MATMCA AND MATMCB)</scope>
    <source>
        <strain>972 / ATCC 24843</strain>
    </source>
</reference>